<proteinExistence type="evidence at protein level"/>
<dbReference type="EMBL" id="AL123456">
    <property type="protein sequence ID" value="CCP45008.1"/>
    <property type="molecule type" value="Genomic_DNA"/>
</dbReference>
<dbReference type="PIR" id="B70777">
    <property type="entry name" value="B70777"/>
</dbReference>
<dbReference type="RefSeq" id="NP_216746.1">
    <property type="nucleotide sequence ID" value="NC_000962.3"/>
</dbReference>
<dbReference type="RefSeq" id="WP_003411502.1">
    <property type="nucleotide sequence ID" value="NZ_NVQJ01000008.1"/>
</dbReference>
<dbReference type="SMR" id="P9WFM1"/>
<dbReference type="STRING" id="83332.Rv2230c"/>
<dbReference type="PaxDb" id="83332-Rv2230c"/>
<dbReference type="DNASU" id="888231"/>
<dbReference type="GeneID" id="888231"/>
<dbReference type="KEGG" id="mtu:Rv2230c"/>
<dbReference type="KEGG" id="mtv:RVBD_2230c"/>
<dbReference type="TubercuList" id="Rv2230c"/>
<dbReference type="eggNOG" id="COG0327">
    <property type="taxonomic scope" value="Bacteria"/>
</dbReference>
<dbReference type="eggNOG" id="COG3323">
    <property type="taxonomic scope" value="Bacteria"/>
</dbReference>
<dbReference type="InParanoid" id="P9WFM1"/>
<dbReference type="OrthoDB" id="9795763at2"/>
<dbReference type="PhylomeDB" id="P9WFM1"/>
<dbReference type="Proteomes" id="UP000001584">
    <property type="component" value="Chromosome"/>
</dbReference>
<dbReference type="GO" id="GO:0005737">
    <property type="term" value="C:cytoplasm"/>
    <property type="evidence" value="ECO:0000318"/>
    <property type="project" value="GO_Central"/>
</dbReference>
<dbReference type="GO" id="GO:0046872">
    <property type="term" value="F:metal ion binding"/>
    <property type="evidence" value="ECO:0007669"/>
    <property type="project" value="UniProtKB-KW"/>
</dbReference>
<dbReference type="FunFam" id="3.40.1390.30:FF:000001">
    <property type="entry name" value="GTP cyclohydrolase 1 type 2"/>
    <property type="match status" value="1"/>
</dbReference>
<dbReference type="FunFam" id="3.30.70.120:FF:000006">
    <property type="entry name" value="GTP cyclohydrolase 1 type 2 homolog"/>
    <property type="match status" value="1"/>
</dbReference>
<dbReference type="Gene3D" id="3.30.70.120">
    <property type="match status" value="1"/>
</dbReference>
<dbReference type="Gene3D" id="3.40.1390.30">
    <property type="entry name" value="NIF3 (NGG1p interacting factor 3)-like"/>
    <property type="match status" value="1"/>
</dbReference>
<dbReference type="InterPro" id="IPR002678">
    <property type="entry name" value="DUF34/NIF3"/>
</dbReference>
<dbReference type="InterPro" id="IPR017221">
    <property type="entry name" value="DUF34/NIF3_bac"/>
</dbReference>
<dbReference type="InterPro" id="IPR036069">
    <property type="entry name" value="DUF34/NIF3_sf"/>
</dbReference>
<dbReference type="InterPro" id="IPR015867">
    <property type="entry name" value="N-reg_PII/ATP_PRibTrfase_C"/>
</dbReference>
<dbReference type="NCBIfam" id="TIGR00486">
    <property type="entry name" value="YbgI_SA1388"/>
    <property type="match status" value="1"/>
</dbReference>
<dbReference type="PANTHER" id="PTHR13799:SF14">
    <property type="entry name" value="GTP CYCLOHYDROLASE 1 TYPE 2 HOMOLOG"/>
    <property type="match status" value="1"/>
</dbReference>
<dbReference type="PANTHER" id="PTHR13799">
    <property type="entry name" value="NGG1 INTERACTING FACTOR 3"/>
    <property type="match status" value="1"/>
</dbReference>
<dbReference type="Pfam" id="PF01784">
    <property type="entry name" value="DUF34_NIF3"/>
    <property type="match status" value="1"/>
</dbReference>
<dbReference type="PIRSF" id="PIRSF037489">
    <property type="entry name" value="UCP037489_NIF3_YqfO"/>
    <property type="match status" value="1"/>
</dbReference>
<dbReference type="SUPFAM" id="SSF102705">
    <property type="entry name" value="NIF3 (NGG1p interacting factor 3)-like"/>
    <property type="match status" value="1"/>
</dbReference>
<gene>
    <name type="ordered locus">Rv2230c</name>
    <name type="ORF">MTCY427.11c</name>
</gene>
<accession>P9WFM1</accession>
<accession>L0TAK4</accession>
<accession>P0A656</accession>
<accession>Q10514</accession>
<protein>
    <recommendedName>
        <fullName>GTP cyclohydrolase 1 type 2 homolog</fullName>
    </recommendedName>
</protein>
<comment type="subunit">
    <text evidence="1">Homohexamer.</text>
</comment>
<comment type="similarity">
    <text evidence="2">Belongs to the GTP cyclohydrolase I type 2/NIF3 family.</text>
</comment>
<sequence length="379" mass="39598">MSVRLADVIDVLDQAYPPRLAQSWDSVGLVCGDPDDVVDSVTVAVDATPAVVDQVPQAGLLLVHHPLLLRGVDTVAANTPKGVLVHRLIRTGRSLFTAHTNADSASPGVSDALAHAVGLTVDAVLDPVPGAADLDKWVIYVPRENSEAVRAAVFEAGAGHIGDYSHCSWSVAGTGQFLAHDGASPAIGSVGTVERVAEDRVEVVAPARARAEVLAAMRAAHPYEEPAFDIFALVPPPVGSGLGRIGRLPKPEPLRTFVARLEAALPPTATGVRAAGDPDLLVSRVAVCGGAGDSLLATVAAADVQAYVTADLRHHPADEHCRASQVALIDVAHWASEFPWCGQAAEVLRSHFGASLPVRVCTICTDPWNLDHETGRDQA</sequence>
<organism>
    <name type="scientific">Mycobacterium tuberculosis (strain ATCC 25618 / H37Rv)</name>
    <dbReference type="NCBI Taxonomy" id="83332"/>
    <lineage>
        <taxon>Bacteria</taxon>
        <taxon>Bacillati</taxon>
        <taxon>Actinomycetota</taxon>
        <taxon>Actinomycetes</taxon>
        <taxon>Mycobacteriales</taxon>
        <taxon>Mycobacteriaceae</taxon>
        <taxon>Mycobacterium</taxon>
        <taxon>Mycobacterium tuberculosis complex</taxon>
    </lineage>
</organism>
<feature type="chain" id="PRO_0000147318" description="GTP cyclohydrolase 1 type 2 homolog">
    <location>
        <begin position="1"/>
        <end position="379"/>
    </location>
</feature>
<feature type="binding site" evidence="1">
    <location>
        <position position="64"/>
    </location>
    <ligand>
        <name>a divalent metal cation</name>
        <dbReference type="ChEBI" id="CHEBI:60240"/>
        <label>1</label>
    </ligand>
</feature>
<feature type="binding site" evidence="1">
    <location>
        <position position="65"/>
    </location>
    <ligand>
        <name>a divalent metal cation</name>
        <dbReference type="ChEBI" id="CHEBI:60240"/>
        <label>2</label>
    </ligand>
</feature>
<feature type="binding site" evidence="1">
    <location>
        <position position="103"/>
    </location>
    <ligand>
        <name>a divalent metal cation</name>
        <dbReference type="ChEBI" id="CHEBI:60240"/>
        <label>1</label>
    </ligand>
</feature>
<feature type="binding site" evidence="1">
    <location>
        <position position="333"/>
    </location>
    <ligand>
        <name>a divalent metal cation</name>
        <dbReference type="ChEBI" id="CHEBI:60240"/>
        <label>2</label>
    </ligand>
</feature>
<feature type="binding site" evidence="1">
    <location>
        <position position="337"/>
    </location>
    <ligand>
        <name>a divalent metal cation</name>
        <dbReference type="ChEBI" id="CHEBI:60240"/>
        <label>1</label>
    </ligand>
</feature>
<feature type="binding site" evidence="1">
    <location>
        <position position="337"/>
    </location>
    <ligand>
        <name>a divalent metal cation</name>
        <dbReference type="ChEBI" id="CHEBI:60240"/>
        <label>2</label>
    </ligand>
</feature>
<keyword id="KW-0479">Metal-binding</keyword>
<keyword id="KW-1185">Reference proteome</keyword>
<reference key="1">
    <citation type="journal article" date="1998" name="Nature">
        <title>Deciphering the biology of Mycobacterium tuberculosis from the complete genome sequence.</title>
        <authorList>
            <person name="Cole S.T."/>
            <person name="Brosch R."/>
            <person name="Parkhill J."/>
            <person name="Garnier T."/>
            <person name="Churcher C.M."/>
            <person name="Harris D.E."/>
            <person name="Gordon S.V."/>
            <person name="Eiglmeier K."/>
            <person name="Gas S."/>
            <person name="Barry C.E. III"/>
            <person name="Tekaia F."/>
            <person name="Badcock K."/>
            <person name="Basham D."/>
            <person name="Brown D."/>
            <person name="Chillingworth T."/>
            <person name="Connor R."/>
            <person name="Davies R.M."/>
            <person name="Devlin K."/>
            <person name="Feltwell T."/>
            <person name="Gentles S."/>
            <person name="Hamlin N."/>
            <person name="Holroyd S."/>
            <person name="Hornsby T."/>
            <person name="Jagels K."/>
            <person name="Krogh A."/>
            <person name="McLean J."/>
            <person name="Moule S."/>
            <person name="Murphy L.D."/>
            <person name="Oliver S."/>
            <person name="Osborne J."/>
            <person name="Quail M.A."/>
            <person name="Rajandream M.A."/>
            <person name="Rogers J."/>
            <person name="Rutter S."/>
            <person name="Seeger K."/>
            <person name="Skelton S."/>
            <person name="Squares S."/>
            <person name="Squares R."/>
            <person name="Sulston J.E."/>
            <person name="Taylor K."/>
            <person name="Whitehead S."/>
            <person name="Barrell B.G."/>
        </authorList>
    </citation>
    <scope>NUCLEOTIDE SEQUENCE [LARGE SCALE GENOMIC DNA]</scope>
    <source>
        <strain>ATCC 25618 / H37Rv</strain>
    </source>
</reference>
<reference key="2">
    <citation type="journal article" date="2011" name="Mol. Cell. Proteomics">
        <title>Proteogenomic analysis of Mycobacterium tuberculosis by high resolution mass spectrometry.</title>
        <authorList>
            <person name="Kelkar D.S."/>
            <person name="Kumar D."/>
            <person name="Kumar P."/>
            <person name="Balakrishnan L."/>
            <person name="Muthusamy B."/>
            <person name="Yadav A.K."/>
            <person name="Shrivastava P."/>
            <person name="Marimuthu A."/>
            <person name="Anand S."/>
            <person name="Sundaram H."/>
            <person name="Kingsbury R."/>
            <person name="Harsha H.C."/>
            <person name="Nair B."/>
            <person name="Prasad T.S."/>
            <person name="Chauhan D.S."/>
            <person name="Katoch K."/>
            <person name="Katoch V.M."/>
            <person name="Kumar P."/>
            <person name="Chaerkady R."/>
            <person name="Ramachandran S."/>
            <person name="Dash D."/>
            <person name="Pandey A."/>
        </authorList>
    </citation>
    <scope>IDENTIFICATION BY MASS SPECTROMETRY [LARGE SCALE ANALYSIS]</scope>
    <source>
        <strain>ATCC 25618 / H37Rv</strain>
    </source>
</reference>
<name>GCH1L_MYCTU</name>
<evidence type="ECO:0000250" key="1">
    <source>
        <dbReference type="UniProtKB" id="P0AFP6"/>
    </source>
</evidence>
<evidence type="ECO:0000305" key="2"/>